<feature type="chain" id="PRO_0000129133" description="Biopolymer transport protein exbD2">
    <location>
        <begin position="1"/>
        <end position="134"/>
    </location>
</feature>
<feature type="topological domain" description="Cytoplasmic" evidence="2">
    <location>
        <begin position="1"/>
        <end position="17"/>
    </location>
</feature>
<feature type="transmembrane region" description="Helical" evidence="2">
    <location>
        <begin position="18"/>
        <end position="38"/>
    </location>
</feature>
<feature type="topological domain" description="Periplasmic" evidence="2">
    <location>
        <begin position="39"/>
        <end position="134"/>
    </location>
</feature>
<comment type="function">
    <text evidence="1">Involved in the TonB-dependent energy-dependent transport of various receptor-bound substrates.</text>
</comment>
<comment type="subunit">
    <text evidence="1">The accessory proteins ExbB and ExbD seem to form a complex with TonB.</text>
</comment>
<comment type="subcellular location">
    <subcellularLocation>
        <location evidence="3">Cell inner membrane</location>
        <topology evidence="3">Single-pass type II membrane protein</topology>
    </subcellularLocation>
</comment>
<comment type="similarity">
    <text evidence="3">Belongs to the ExbD/TolR family.</text>
</comment>
<reference key="1">
    <citation type="journal article" date="1998" name="Mol. Microbiol.">
        <title>Vibrio cholerae iron transport: haem transport genes are linked to one of two sets of tonB, exbB, exbD genes.</title>
        <authorList>
            <person name="Occhino D.A."/>
            <person name="Wyckoff E.E."/>
            <person name="Henderson D.P."/>
            <person name="Wrona T.J."/>
            <person name="Payne S.M."/>
        </authorList>
    </citation>
    <scope>NUCLEOTIDE SEQUENCE [GENOMIC DNA]</scope>
    <source>
        <strain>Classical CA401</strain>
    </source>
</reference>
<reference key="2">
    <citation type="journal article" date="2000" name="Nature">
        <title>DNA sequence of both chromosomes of the cholera pathogen Vibrio cholerae.</title>
        <authorList>
            <person name="Heidelberg J.F."/>
            <person name="Eisen J.A."/>
            <person name="Nelson W.C."/>
            <person name="Clayton R.A."/>
            <person name="Gwinn M.L."/>
            <person name="Dodson R.J."/>
            <person name="Haft D.H."/>
            <person name="Hickey E.K."/>
            <person name="Peterson J.D."/>
            <person name="Umayam L.A."/>
            <person name="Gill S.R."/>
            <person name="Nelson K.E."/>
            <person name="Read T.D."/>
            <person name="Tettelin H."/>
            <person name="Richardson D.L."/>
            <person name="Ermolaeva M.D."/>
            <person name="Vamathevan J.J."/>
            <person name="Bass S."/>
            <person name="Qin H."/>
            <person name="Dragoi I."/>
            <person name="Sellers P."/>
            <person name="McDonald L.A."/>
            <person name="Utterback T.R."/>
            <person name="Fleischmann R.D."/>
            <person name="Nierman W.C."/>
            <person name="White O."/>
            <person name="Salzberg S.L."/>
            <person name="Smith H.O."/>
            <person name="Colwell R.R."/>
            <person name="Mekalanos J.J."/>
            <person name="Venter J.C."/>
            <person name="Fraser C.M."/>
        </authorList>
    </citation>
    <scope>NUCLEOTIDE SEQUENCE [LARGE SCALE GENOMIC DNA]</scope>
    <source>
        <strain>ATCC 39315 / El Tor Inaba N16961</strain>
    </source>
</reference>
<gene>
    <name type="primary">exbD2</name>
    <name type="ordered locus">VC_1545</name>
</gene>
<dbReference type="EMBL" id="AF047974">
    <property type="protein sequence ID" value="AAC69455.1"/>
    <property type="molecule type" value="Genomic_DNA"/>
</dbReference>
<dbReference type="EMBL" id="AE003852">
    <property type="protein sequence ID" value="AAF94699.1"/>
    <property type="molecule type" value="Genomic_DNA"/>
</dbReference>
<dbReference type="PIR" id="E82187">
    <property type="entry name" value="E82187"/>
</dbReference>
<dbReference type="RefSeq" id="NP_231185.1">
    <property type="nucleotide sequence ID" value="NC_002505.1"/>
</dbReference>
<dbReference type="RefSeq" id="WP_001236425.1">
    <property type="nucleotide sequence ID" value="NZ_LT906614.1"/>
</dbReference>
<dbReference type="SMR" id="Q9ZHV9"/>
<dbReference type="STRING" id="243277.VC_1545"/>
<dbReference type="DNASU" id="2613924"/>
<dbReference type="EnsemblBacteria" id="AAF94699">
    <property type="protein sequence ID" value="AAF94699"/>
    <property type="gene ID" value="VC_1545"/>
</dbReference>
<dbReference type="KEGG" id="vch:VC_1545"/>
<dbReference type="PATRIC" id="fig|243277.26.peg.1474"/>
<dbReference type="eggNOG" id="COG0848">
    <property type="taxonomic scope" value="Bacteria"/>
</dbReference>
<dbReference type="HOGENOM" id="CLU_085305_3_0_6"/>
<dbReference type="Proteomes" id="UP000000584">
    <property type="component" value="Chromosome 1"/>
</dbReference>
<dbReference type="GO" id="GO:0005886">
    <property type="term" value="C:plasma membrane"/>
    <property type="evidence" value="ECO:0000318"/>
    <property type="project" value="GO_Central"/>
</dbReference>
<dbReference type="GO" id="GO:0022857">
    <property type="term" value="F:transmembrane transporter activity"/>
    <property type="evidence" value="ECO:0007669"/>
    <property type="project" value="InterPro"/>
</dbReference>
<dbReference type="GO" id="GO:0015031">
    <property type="term" value="P:protein transport"/>
    <property type="evidence" value="ECO:0007669"/>
    <property type="project" value="UniProtKB-KW"/>
</dbReference>
<dbReference type="FunFam" id="3.30.420.270:FF:000007">
    <property type="entry name" value="Biopolymer transport protein ExbD"/>
    <property type="match status" value="1"/>
</dbReference>
<dbReference type="Gene3D" id="3.30.420.270">
    <property type="match status" value="1"/>
</dbReference>
<dbReference type="InterPro" id="IPR003400">
    <property type="entry name" value="ExbD"/>
</dbReference>
<dbReference type="PANTHER" id="PTHR30558:SF13">
    <property type="entry name" value="BIOPOLYMER TRANSPORT PROTEIN EXBD2"/>
    <property type="match status" value="1"/>
</dbReference>
<dbReference type="PANTHER" id="PTHR30558">
    <property type="entry name" value="EXBD MEMBRANE COMPONENT OF PMF-DRIVEN MACROMOLECULE IMPORT SYSTEM"/>
    <property type="match status" value="1"/>
</dbReference>
<dbReference type="Pfam" id="PF02472">
    <property type="entry name" value="ExbD"/>
    <property type="match status" value="1"/>
</dbReference>
<sequence>MRLGRRTSKQEEAQIDLTSMLDIVFIMLIFFIVTSSFVRESGVEVNRPTAAHAVSQKQAGIFVAITAANDIYIDKRQVDVERVQATLEHLLLDQPDASLVIQADEHAFNGTVVKVMDAAKGAGVKSIALAAEKP</sequence>
<organism>
    <name type="scientific">Vibrio cholerae serotype O1 (strain ATCC 39315 / El Tor Inaba N16961)</name>
    <dbReference type="NCBI Taxonomy" id="243277"/>
    <lineage>
        <taxon>Bacteria</taxon>
        <taxon>Pseudomonadati</taxon>
        <taxon>Pseudomonadota</taxon>
        <taxon>Gammaproteobacteria</taxon>
        <taxon>Vibrionales</taxon>
        <taxon>Vibrionaceae</taxon>
        <taxon>Vibrio</taxon>
    </lineage>
</organism>
<proteinExistence type="inferred from homology"/>
<accession>Q9ZHV9</accession>
<protein>
    <recommendedName>
        <fullName>Biopolymer transport protein exbD2</fullName>
    </recommendedName>
</protein>
<name>EXBD2_VIBCH</name>
<keyword id="KW-0997">Cell inner membrane</keyword>
<keyword id="KW-1003">Cell membrane</keyword>
<keyword id="KW-0472">Membrane</keyword>
<keyword id="KW-0653">Protein transport</keyword>
<keyword id="KW-1185">Reference proteome</keyword>
<keyword id="KW-0812">Transmembrane</keyword>
<keyword id="KW-1133">Transmembrane helix</keyword>
<keyword id="KW-0813">Transport</keyword>
<evidence type="ECO:0000250" key="1"/>
<evidence type="ECO:0000255" key="2"/>
<evidence type="ECO:0000305" key="3"/>